<protein>
    <recommendedName>
        <fullName evidence="2">Small ribosomal subunit protein uS12</fullName>
    </recommendedName>
    <alternativeName>
        <fullName evidence="4">30S ribosomal protein S12</fullName>
    </alternativeName>
</protein>
<sequence length="142" mass="15493">MPTFNQLVRKGRKVIEKKSNSPALQKGFNSKKKKPTDVNSPQKRGVCTVVKTSTPKKPNSALRKVARVRLTNGIEVSAYIPGIGHNLQEHSVVLIRGGRVKDLPGVRYHIVRGTLDTAGVAKRMQARSKYGAKRPKAGAASK</sequence>
<accession>B8I5N5</accession>
<feature type="chain" id="PRO_1000134626" description="Small ribosomal subunit protein uS12">
    <location>
        <begin position="1"/>
        <end position="142"/>
    </location>
</feature>
<feature type="region of interest" description="Disordered" evidence="3">
    <location>
        <begin position="1"/>
        <end position="43"/>
    </location>
</feature>
<feature type="modified residue" description="3-methylthioaspartic acid" evidence="1">
    <location>
        <position position="102"/>
    </location>
</feature>
<name>RS12_RUMCH</name>
<evidence type="ECO:0000250" key="1"/>
<evidence type="ECO:0000255" key="2">
    <source>
        <dbReference type="HAMAP-Rule" id="MF_00403"/>
    </source>
</evidence>
<evidence type="ECO:0000256" key="3">
    <source>
        <dbReference type="SAM" id="MobiDB-lite"/>
    </source>
</evidence>
<evidence type="ECO:0000305" key="4"/>
<dbReference type="EMBL" id="CP001348">
    <property type="protein sequence ID" value="ACL74702.1"/>
    <property type="molecule type" value="Genomic_DNA"/>
</dbReference>
<dbReference type="RefSeq" id="WP_012634767.1">
    <property type="nucleotide sequence ID" value="NC_011898.1"/>
</dbReference>
<dbReference type="SMR" id="B8I5N5"/>
<dbReference type="STRING" id="394503.Ccel_0315"/>
<dbReference type="KEGG" id="cce:Ccel_0315"/>
<dbReference type="eggNOG" id="COG0048">
    <property type="taxonomic scope" value="Bacteria"/>
</dbReference>
<dbReference type="HOGENOM" id="CLU_104295_1_2_9"/>
<dbReference type="OrthoDB" id="9802366at2"/>
<dbReference type="Proteomes" id="UP000001349">
    <property type="component" value="Chromosome"/>
</dbReference>
<dbReference type="GO" id="GO:0015935">
    <property type="term" value="C:small ribosomal subunit"/>
    <property type="evidence" value="ECO:0007669"/>
    <property type="project" value="InterPro"/>
</dbReference>
<dbReference type="GO" id="GO:0019843">
    <property type="term" value="F:rRNA binding"/>
    <property type="evidence" value="ECO:0007669"/>
    <property type="project" value="UniProtKB-UniRule"/>
</dbReference>
<dbReference type="GO" id="GO:0003735">
    <property type="term" value="F:structural constituent of ribosome"/>
    <property type="evidence" value="ECO:0007669"/>
    <property type="project" value="InterPro"/>
</dbReference>
<dbReference type="GO" id="GO:0000049">
    <property type="term" value="F:tRNA binding"/>
    <property type="evidence" value="ECO:0007669"/>
    <property type="project" value="UniProtKB-UniRule"/>
</dbReference>
<dbReference type="GO" id="GO:0006412">
    <property type="term" value="P:translation"/>
    <property type="evidence" value="ECO:0007669"/>
    <property type="project" value="UniProtKB-UniRule"/>
</dbReference>
<dbReference type="CDD" id="cd03368">
    <property type="entry name" value="Ribosomal_S12"/>
    <property type="match status" value="1"/>
</dbReference>
<dbReference type="FunFam" id="2.40.50.140:FF:000001">
    <property type="entry name" value="30S ribosomal protein S12"/>
    <property type="match status" value="1"/>
</dbReference>
<dbReference type="Gene3D" id="2.40.50.140">
    <property type="entry name" value="Nucleic acid-binding proteins"/>
    <property type="match status" value="1"/>
</dbReference>
<dbReference type="HAMAP" id="MF_00403_B">
    <property type="entry name" value="Ribosomal_uS12_B"/>
    <property type="match status" value="1"/>
</dbReference>
<dbReference type="InterPro" id="IPR012340">
    <property type="entry name" value="NA-bd_OB-fold"/>
</dbReference>
<dbReference type="InterPro" id="IPR006032">
    <property type="entry name" value="Ribosomal_uS12"/>
</dbReference>
<dbReference type="InterPro" id="IPR005679">
    <property type="entry name" value="Ribosomal_uS12_bac"/>
</dbReference>
<dbReference type="NCBIfam" id="TIGR00981">
    <property type="entry name" value="rpsL_bact"/>
    <property type="match status" value="1"/>
</dbReference>
<dbReference type="PANTHER" id="PTHR11652">
    <property type="entry name" value="30S RIBOSOMAL PROTEIN S12 FAMILY MEMBER"/>
    <property type="match status" value="1"/>
</dbReference>
<dbReference type="Pfam" id="PF00164">
    <property type="entry name" value="Ribosom_S12_S23"/>
    <property type="match status" value="1"/>
</dbReference>
<dbReference type="PRINTS" id="PR01034">
    <property type="entry name" value="RIBOSOMALS12"/>
</dbReference>
<dbReference type="SUPFAM" id="SSF50249">
    <property type="entry name" value="Nucleic acid-binding proteins"/>
    <property type="match status" value="1"/>
</dbReference>
<dbReference type="PROSITE" id="PS00055">
    <property type="entry name" value="RIBOSOMAL_S12"/>
    <property type="match status" value="1"/>
</dbReference>
<keyword id="KW-0488">Methylation</keyword>
<keyword id="KW-1185">Reference proteome</keyword>
<keyword id="KW-0687">Ribonucleoprotein</keyword>
<keyword id="KW-0689">Ribosomal protein</keyword>
<keyword id="KW-0694">RNA-binding</keyword>
<keyword id="KW-0699">rRNA-binding</keyword>
<keyword id="KW-0820">tRNA-binding</keyword>
<proteinExistence type="inferred from homology"/>
<comment type="function">
    <text evidence="2">With S4 and S5 plays an important role in translational accuracy.</text>
</comment>
<comment type="function">
    <text evidence="2">Interacts with and stabilizes bases of the 16S rRNA that are involved in tRNA selection in the A site and with the mRNA backbone. Located at the interface of the 30S and 50S subunits, it traverses the body of the 30S subunit contacting proteins on the other side and probably holding the rRNA structure together. The combined cluster of proteins S8, S12 and S17 appears to hold together the shoulder and platform of the 30S subunit.</text>
</comment>
<comment type="subunit">
    <text evidence="2">Part of the 30S ribosomal subunit. Contacts proteins S8 and S17. May interact with IF1 in the 30S initiation complex.</text>
</comment>
<comment type="similarity">
    <text evidence="2">Belongs to the universal ribosomal protein uS12 family.</text>
</comment>
<organism>
    <name type="scientific">Ruminiclostridium cellulolyticum (strain ATCC 35319 / DSM 5812 / JCM 6584 / H10)</name>
    <name type="common">Clostridium cellulolyticum</name>
    <dbReference type="NCBI Taxonomy" id="394503"/>
    <lineage>
        <taxon>Bacteria</taxon>
        <taxon>Bacillati</taxon>
        <taxon>Bacillota</taxon>
        <taxon>Clostridia</taxon>
        <taxon>Eubacteriales</taxon>
        <taxon>Oscillospiraceae</taxon>
        <taxon>Ruminiclostridium</taxon>
    </lineage>
</organism>
<gene>
    <name evidence="2" type="primary">rpsL</name>
    <name type="ordered locus">Ccel_0315</name>
</gene>
<reference key="1">
    <citation type="submission" date="2009-01" db="EMBL/GenBank/DDBJ databases">
        <title>Complete sequence of Clostridium cellulolyticum H10.</title>
        <authorList>
            <consortium name="US DOE Joint Genome Institute"/>
            <person name="Lucas S."/>
            <person name="Copeland A."/>
            <person name="Lapidus A."/>
            <person name="Glavina del Rio T."/>
            <person name="Dalin E."/>
            <person name="Tice H."/>
            <person name="Bruce D."/>
            <person name="Goodwin L."/>
            <person name="Pitluck S."/>
            <person name="Chertkov O."/>
            <person name="Saunders E."/>
            <person name="Brettin T."/>
            <person name="Detter J.C."/>
            <person name="Han C."/>
            <person name="Larimer F."/>
            <person name="Land M."/>
            <person name="Hauser L."/>
            <person name="Kyrpides N."/>
            <person name="Ivanova N."/>
            <person name="Zhou J."/>
            <person name="Richardson P."/>
        </authorList>
    </citation>
    <scope>NUCLEOTIDE SEQUENCE [LARGE SCALE GENOMIC DNA]</scope>
    <source>
        <strain>ATCC 35319 / DSM 5812 / JCM 6584 / H10</strain>
    </source>
</reference>